<comment type="function">
    <text>This protein is postulated to act both as terminal energy acceptor (by its phycobilin-like domains) and as a linker polypeptide (by its repeats and arms) that stabilizes the phycobilisome core architecture.</text>
</comment>
<comment type="function">
    <text evidence="1">Has intrinsic bilin lyase activity.</text>
</comment>
<comment type="subunit">
    <text>Phycobilisomes of this organism are composed of a two cylinder core, from which six rods radiate. The core is mainly composed of allophycocyanin alpha and beta chains, and of three minor components: the allophycocyanin alpha-B chain, a 18.3 kDa polypeptide, and the anchor polypeptide L-CM.</text>
</comment>
<comment type="subcellular location">
    <subcellularLocation>
        <location>Cellular thylakoid membrane</location>
        <topology>Peripheral membrane protein</topology>
        <orientation>Cytoplasmic side</orientation>
    </subcellularLocation>
    <text>Anchors the phycobilisome perpendicularly to the cytoplasmic surface of the thylakoid membrane.</text>
</comment>
<comment type="PTM">
    <text evidence="1">Contains one covalently linked bilin chromophore. This protein autochromophorylates (By similarity).</text>
</comment>
<comment type="similarity">
    <text evidence="2">Belongs to the phycobilisome linker protein family.</text>
</comment>
<feature type="initiator methionine" description="Removed" evidence="4">
    <location>
        <position position="1"/>
    </location>
</feature>
<feature type="chain" id="PRO_0000199263" description="Phycobiliprotein ApcE">
    <location>
        <begin position="2"/>
        <end position="1080"/>
    </location>
</feature>
<feature type="domain" description="PBS-linker 1" evidence="2">
    <location>
        <begin position="252"/>
        <end position="432"/>
    </location>
</feature>
<feature type="domain" description="PBS-linker 2" evidence="2">
    <location>
        <begin position="514"/>
        <end position="693"/>
    </location>
</feature>
<feature type="domain" description="PBS-linker 3" evidence="2">
    <location>
        <begin position="710"/>
        <end position="888"/>
    </location>
</feature>
<feature type="domain" description="PBS-linker 4" evidence="2">
    <location>
        <begin position="922"/>
        <end position="1080"/>
    </location>
</feature>
<feature type="region of interest" description="Phycobilin-like 1">
    <location>
        <begin position="18"/>
        <end position="76"/>
    </location>
</feature>
<feature type="region of interest" description="Phycobilin-like loop">
    <location>
        <begin position="77"/>
        <end position="144"/>
    </location>
</feature>
<feature type="region of interest" description="Phycobilin-like 2">
    <location>
        <begin position="145"/>
        <end position="237"/>
    </location>
</feature>
<feature type="region of interest" description="Disordered" evidence="3">
    <location>
        <begin position="906"/>
        <end position="930"/>
    </location>
</feature>
<feature type="binding site" description="covalent" evidence="1">
    <location>
        <position position="195"/>
    </location>
    <ligand>
        <name>(2R,3E)-phycocyanobilin</name>
        <dbReference type="ChEBI" id="CHEBI:85275"/>
    </ligand>
</feature>
<feature type="sequence conflict" description="In Ref. 2; AA sequence." evidence="5" ref="2">
    <original>S</original>
    <variation>SS</variation>
    <location>
        <position position="10"/>
    </location>
</feature>
<evidence type="ECO:0000250" key="1"/>
<evidence type="ECO:0000255" key="2">
    <source>
        <dbReference type="PROSITE-ProRule" id="PRU00775"/>
    </source>
</evidence>
<evidence type="ECO:0000256" key="3">
    <source>
        <dbReference type="SAM" id="MobiDB-lite"/>
    </source>
</evidence>
<evidence type="ECO:0000269" key="4">
    <source>
    </source>
</evidence>
<evidence type="ECO:0000305" key="5"/>
<protein>
    <recommendedName>
        <fullName>Phycobiliprotein ApcE</fullName>
        <ecNumber>4.-.-.-</ecNumber>
    </recommendedName>
    <alternativeName>
        <fullName>Core-membrane linker protein</fullName>
    </alternativeName>
    <alternativeName>
        <fullName>L-CM 92</fullName>
    </alternativeName>
    <alternativeName>
        <fullName>Phycobilisome 120 kDa linker polypeptide, core</fullName>
    </alternativeName>
</protein>
<organism>
    <name type="scientific">Microchaete diplosiphon</name>
    <name type="common">Fremyella diplosiphon</name>
    <dbReference type="NCBI Taxonomy" id="1197"/>
    <lineage>
        <taxon>Bacteria</taxon>
        <taxon>Bacillati</taxon>
        <taxon>Cyanobacteriota</taxon>
        <taxon>Cyanophyceae</taxon>
        <taxon>Nostocales</taxon>
        <taxon>Rivulariaceae</taxon>
        <taxon>Microchaete</taxon>
    </lineage>
</organism>
<name>APCE_MICDP</name>
<dbReference type="EC" id="4.-.-.-"/>
<dbReference type="EMBL" id="M20806">
    <property type="protein sequence ID" value="AAA24873.1"/>
    <property type="molecule type" value="Genomic_DNA"/>
</dbReference>
<dbReference type="PIR" id="A35088">
    <property type="entry name" value="A35088"/>
</dbReference>
<dbReference type="SMR" id="P16566"/>
<dbReference type="GO" id="GO:0030089">
    <property type="term" value="C:phycobilisome"/>
    <property type="evidence" value="ECO:0007669"/>
    <property type="project" value="UniProtKB-KW"/>
</dbReference>
<dbReference type="GO" id="GO:0031676">
    <property type="term" value="C:plasma membrane-derived thylakoid membrane"/>
    <property type="evidence" value="ECO:0007669"/>
    <property type="project" value="UniProtKB-SubCell"/>
</dbReference>
<dbReference type="GO" id="GO:0016829">
    <property type="term" value="F:lyase activity"/>
    <property type="evidence" value="ECO:0007669"/>
    <property type="project" value="UniProtKB-KW"/>
</dbReference>
<dbReference type="GO" id="GO:0015979">
    <property type="term" value="P:photosynthesis"/>
    <property type="evidence" value="ECO:0007669"/>
    <property type="project" value="UniProtKB-KW"/>
</dbReference>
<dbReference type="CDD" id="cd12128">
    <property type="entry name" value="PBP_PBS-LCM"/>
    <property type="match status" value="1"/>
</dbReference>
<dbReference type="Gene3D" id="1.10.3130.20">
    <property type="entry name" value="Phycobilisome linker domain"/>
    <property type="match status" value="4"/>
</dbReference>
<dbReference type="Gene3D" id="1.10.490.20">
    <property type="entry name" value="Phycocyanins"/>
    <property type="match status" value="1"/>
</dbReference>
<dbReference type="InterPro" id="IPR009050">
    <property type="entry name" value="Globin-like_sf"/>
</dbReference>
<dbReference type="InterPro" id="IPR001297">
    <property type="entry name" value="PBS_linker_dom"/>
</dbReference>
<dbReference type="InterPro" id="IPR038255">
    <property type="entry name" value="PBS_linker_sf"/>
</dbReference>
<dbReference type="InterPro" id="IPR012128">
    <property type="entry name" value="Phycobilisome_asu/bsu"/>
</dbReference>
<dbReference type="InterPro" id="IPR038719">
    <property type="entry name" value="Phycobilisome_asu/bsu_sf"/>
</dbReference>
<dbReference type="PANTHER" id="PTHR34011:SF6">
    <property type="entry name" value="PHYCOBILIPROTEIN APCE"/>
    <property type="match status" value="1"/>
</dbReference>
<dbReference type="PANTHER" id="PTHR34011">
    <property type="entry name" value="PHYCOBILISOME 32.1 KDA LINKER POLYPEPTIDE, PHYCOCYANIN-ASSOCIATED, ROD 2-RELATED"/>
    <property type="match status" value="1"/>
</dbReference>
<dbReference type="Pfam" id="PF00427">
    <property type="entry name" value="PBS_linker_poly"/>
    <property type="match status" value="4"/>
</dbReference>
<dbReference type="Pfam" id="PF00502">
    <property type="entry name" value="Phycobilisome"/>
    <property type="match status" value="2"/>
</dbReference>
<dbReference type="SUPFAM" id="SSF46458">
    <property type="entry name" value="Globin-like"/>
    <property type="match status" value="1"/>
</dbReference>
<dbReference type="PROSITE" id="PS51445">
    <property type="entry name" value="PBS_LINKER"/>
    <property type="match status" value="4"/>
</dbReference>
<keyword id="KW-0042">Antenna complex</keyword>
<keyword id="KW-0089">Bile pigment</keyword>
<keyword id="KW-0157">Chromophore</keyword>
<keyword id="KW-0903">Direct protein sequencing</keyword>
<keyword id="KW-0249">Electron transport</keyword>
<keyword id="KW-0456">Lyase</keyword>
<keyword id="KW-0472">Membrane</keyword>
<keyword id="KW-0602">Photosynthesis</keyword>
<keyword id="KW-0605">Phycobilisome</keyword>
<keyword id="KW-0677">Repeat</keyword>
<keyword id="KW-0793">Thylakoid</keyword>
<keyword id="KW-0813">Transport</keyword>
<sequence length="1080" mass="120457">MSVKASGGSSVARPQLYQTLAVATITQAEQQDRFLGTGELNELATYFASGAKRLEIAQTLTENSEIIVSRAANRIFVGGSPMSFLEKPREAELAMATVAPGNVQEGMKLGTVTYVESRGGFLENLRSIFNSSPSGPTPPGFRPINVARYGPSNMAKSLRDLSWFLRYATYAIVAGDPNIIAVNTRGLREIIENACSGEPTIVALQEIKAASLSFFRQDAKATEIVSQYMDVLLTEFKAATPSNKLRQRPSGDQQGLQLPQIYFEAAERRPKFVMKPGLSASEKNEVIRAAYRQIFERDITRAYSLSVSDLESKVKNGDISMKEFVRRLAKSPLYQKQFYQPFINSRVIELAFRHILGRGPSSREEVQKYFSIISNGGLPALVDALVDSPEYSDYFGEETVPYLRGLGQEAQECRNWGPQQDLFNYSAPFRKVPQFITTFACLYDRPLPDQHPYGSGNDPLEIQFGAIFPKETRNPNTSPAPFSKDTRRILINQGPGINSQVSNPGARGEFPGSLGPKVFRLDQLPGTIGKKAAKGASIKFSESSTQAVIKAAYLQVFGRDVYEGQRLKVQEIKLENGQLSVREFIRALAKSDVFRKTYWTSLYVCKAIEYIHRRLLGRPTYGRQEINKYFDIAAKQGFYAVVDAIINSVEYSEAFGEDTVPYERYLTPSGVALRQLRVGSIREDVGGKVQKQETPLFVTLGTVTDTRTEPDIQFRINQGVSKQREQTKVFKQVANISDKAAVQTLISAAYRQIFERDVAPYIAKNEFSALESKLSNGEITVKEFIEGLGYSNLYIKEFYTPYPNTKVIELGTKHFLGRAPLDQVEIRKYNQILATQGIRAFIGALVSSAEYAEVFGEDTVPYRRYPTLPAANFPNTEKLYNQLTKQNDDLVVPSFKTVQPRLTLAGTSSSGRNGFTDLGRSSTSAQGQLGETANRCKPARIYRLSGTNQAETQLVINAIYSQVLDLFSSDIPANYRLNALEGKLQTGEISVREFVRELASSDIYCDRFYTPYPSAKVIEFLYRHLLGRAPATQEEISEYNKLMASRGLRAVVEAIVDSQEYARYFGEDVVPYPRSSSLGN</sequence>
<reference key="1">
    <citation type="journal article" date="1990" name="Proc. Natl. Acad. Sci. U.S.A.">
        <title>Molecular characterization of the terminal energy acceptor of cyanobacterial phycobilisomes.</title>
        <authorList>
            <person name="Houmard J."/>
            <person name="Capuano V."/>
            <person name="Colombano M.V."/>
            <person name="Coursin T."/>
            <person name="de Marsac N."/>
        </authorList>
    </citation>
    <scope>NUCLEOTIDE SEQUENCE [GENOMIC DNA]</scope>
</reference>
<reference key="2">
    <citation type="journal article" date="1992" name="FEBS Lett.">
        <title>Three C-phycoerythrin-associated linker polypeptides in the phycobilisome of green-light-grown Calothrix sp. PCC 7601 (cyanobacteria).</title>
        <authorList>
            <person name="Glauser M."/>
            <person name="Sidler W.A."/>
            <person name="Graham K.W."/>
            <person name="Bryant D.A."/>
            <person name="Frank G."/>
            <person name="Wehrli E."/>
            <person name="Zuber H."/>
        </authorList>
    </citation>
    <scope>PROTEIN SEQUENCE OF 2-11</scope>
</reference>
<accession>P16566</accession>
<gene>
    <name type="primary">apcE</name>
</gene>
<proteinExistence type="evidence at protein level"/>